<gene>
    <name evidence="1" type="primary">queA</name>
    <name type="ordered locus">SSA_0744</name>
</gene>
<comment type="function">
    <text evidence="1">Transfers and isomerizes the ribose moiety from AdoMet to the 7-aminomethyl group of 7-deazaguanine (preQ1-tRNA) to give epoxyqueuosine (oQ-tRNA).</text>
</comment>
<comment type="catalytic activity">
    <reaction evidence="1">
        <text>7-aminomethyl-7-carbaguanosine(34) in tRNA + S-adenosyl-L-methionine = epoxyqueuosine(34) in tRNA + adenine + L-methionine + 2 H(+)</text>
        <dbReference type="Rhea" id="RHEA:32155"/>
        <dbReference type="Rhea" id="RHEA-COMP:10342"/>
        <dbReference type="Rhea" id="RHEA-COMP:18582"/>
        <dbReference type="ChEBI" id="CHEBI:15378"/>
        <dbReference type="ChEBI" id="CHEBI:16708"/>
        <dbReference type="ChEBI" id="CHEBI:57844"/>
        <dbReference type="ChEBI" id="CHEBI:59789"/>
        <dbReference type="ChEBI" id="CHEBI:82833"/>
        <dbReference type="ChEBI" id="CHEBI:194443"/>
        <dbReference type="EC" id="2.4.99.17"/>
    </reaction>
</comment>
<comment type="pathway">
    <text evidence="1">tRNA modification; tRNA-queuosine biosynthesis.</text>
</comment>
<comment type="subunit">
    <text evidence="1">Monomer.</text>
</comment>
<comment type="subcellular location">
    <subcellularLocation>
        <location evidence="1">Cytoplasm</location>
    </subcellularLocation>
</comment>
<comment type="similarity">
    <text evidence="1">Belongs to the QueA family.</text>
</comment>
<dbReference type="EC" id="2.4.99.17" evidence="1"/>
<dbReference type="EMBL" id="CP000387">
    <property type="protein sequence ID" value="ABN44177.1"/>
    <property type="molecule type" value="Genomic_DNA"/>
</dbReference>
<dbReference type="RefSeq" id="WP_011836693.1">
    <property type="nucleotide sequence ID" value="NC_009009.1"/>
</dbReference>
<dbReference type="RefSeq" id="YP_001034727.1">
    <property type="nucleotide sequence ID" value="NC_009009.1"/>
</dbReference>
<dbReference type="SMR" id="A3CLX2"/>
<dbReference type="STRING" id="388919.SSA_0744"/>
<dbReference type="KEGG" id="ssa:SSA_0744"/>
<dbReference type="PATRIC" id="fig|388919.9.peg.713"/>
<dbReference type="eggNOG" id="COG0809">
    <property type="taxonomic scope" value="Bacteria"/>
</dbReference>
<dbReference type="HOGENOM" id="CLU_039110_1_0_9"/>
<dbReference type="OrthoDB" id="9805933at2"/>
<dbReference type="UniPathway" id="UPA00392"/>
<dbReference type="Proteomes" id="UP000002148">
    <property type="component" value="Chromosome"/>
</dbReference>
<dbReference type="GO" id="GO:0005737">
    <property type="term" value="C:cytoplasm"/>
    <property type="evidence" value="ECO:0007669"/>
    <property type="project" value="UniProtKB-SubCell"/>
</dbReference>
<dbReference type="GO" id="GO:0051075">
    <property type="term" value="F:S-adenosylmethionine:tRNA ribosyltransferase-isomerase activity"/>
    <property type="evidence" value="ECO:0007669"/>
    <property type="project" value="UniProtKB-EC"/>
</dbReference>
<dbReference type="GO" id="GO:0008616">
    <property type="term" value="P:queuosine biosynthetic process"/>
    <property type="evidence" value="ECO:0007669"/>
    <property type="project" value="UniProtKB-UniRule"/>
</dbReference>
<dbReference type="GO" id="GO:0002099">
    <property type="term" value="P:tRNA wobble guanine modification"/>
    <property type="evidence" value="ECO:0007669"/>
    <property type="project" value="TreeGrafter"/>
</dbReference>
<dbReference type="FunFam" id="2.40.10.240:FF:000002">
    <property type="entry name" value="S-adenosylmethionine:tRNA ribosyltransferase-isomerase"/>
    <property type="match status" value="1"/>
</dbReference>
<dbReference type="FunFam" id="3.40.1780.10:FF:000001">
    <property type="entry name" value="S-adenosylmethionine:tRNA ribosyltransferase-isomerase"/>
    <property type="match status" value="1"/>
</dbReference>
<dbReference type="Gene3D" id="2.40.10.240">
    <property type="entry name" value="QueA-like"/>
    <property type="match status" value="1"/>
</dbReference>
<dbReference type="Gene3D" id="3.40.1780.10">
    <property type="entry name" value="QueA-like"/>
    <property type="match status" value="1"/>
</dbReference>
<dbReference type="HAMAP" id="MF_00113">
    <property type="entry name" value="QueA"/>
    <property type="match status" value="1"/>
</dbReference>
<dbReference type="InterPro" id="IPR003699">
    <property type="entry name" value="QueA"/>
</dbReference>
<dbReference type="InterPro" id="IPR042118">
    <property type="entry name" value="QueA_dom1"/>
</dbReference>
<dbReference type="InterPro" id="IPR042119">
    <property type="entry name" value="QueA_dom2"/>
</dbReference>
<dbReference type="InterPro" id="IPR036100">
    <property type="entry name" value="QueA_sf"/>
</dbReference>
<dbReference type="NCBIfam" id="NF001140">
    <property type="entry name" value="PRK00147.1"/>
    <property type="match status" value="1"/>
</dbReference>
<dbReference type="NCBIfam" id="TIGR00113">
    <property type="entry name" value="queA"/>
    <property type="match status" value="1"/>
</dbReference>
<dbReference type="PANTHER" id="PTHR30307">
    <property type="entry name" value="S-ADENOSYLMETHIONINE:TRNA RIBOSYLTRANSFERASE-ISOMERASE"/>
    <property type="match status" value="1"/>
</dbReference>
<dbReference type="PANTHER" id="PTHR30307:SF0">
    <property type="entry name" value="S-ADENOSYLMETHIONINE:TRNA RIBOSYLTRANSFERASE-ISOMERASE"/>
    <property type="match status" value="1"/>
</dbReference>
<dbReference type="Pfam" id="PF02547">
    <property type="entry name" value="Queuosine_synth"/>
    <property type="match status" value="1"/>
</dbReference>
<dbReference type="SUPFAM" id="SSF111337">
    <property type="entry name" value="QueA-like"/>
    <property type="match status" value="1"/>
</dbReference>
<organism>
    <name type="scientific">Streptococcus sanguinis (strain SK36)</name>
    <dbReference type="NCBI Taxonomy" id="388919"/>
    <lineage>
        <taxon>Bacteria</taxon>
        <taxon>Bacillati</taxon>
        <taxon>Bacillota</taxon>
        <taxon>Bacilli</taxon>
        <taxon>Lactobacillales</taxon>
        <taxon>Streptococcaceae</taxon>
        <taxon>Streptococcus</taxon>
    </lineage>
</organism>
<sequence>MNTADFDFDLPEELIAQTPLEKRDASRLLVVDKETGAFSDQHFDQIIDQLQPGDALVMNNTRVLPARLYGIKPETGGHVELLLLKNTQGDDWEVLAKPAKRLRVGAQISFGDGRLTATVIEELEHGGRIVRFSYEGIFLEVLESLGEMPLPPYIHEKLADRERYQTVYAKENGSAAAPTAGLHFTEELLEQIAAKGVKLVYLTLHVGLGTFRPVSVDSLDDHEMHSEFYSLSEEAAQTLRQVKANGGRVIAVGTTSIRTLETIGSKFQGQIQADSGWTNIFIKPGYNWKVVDAFSTNFHLPKSTLVMLVSAFAGRSLTLEAYEHAIAERYRFFSFGDAMFIK</sequence>
<protein>
    <recommendedName>
        <fullName evidence="1">S-adenosylmethionine:tRNA ribosyltransferase-isomerase</fullName>
        <ecNumber evidence="1">2.4.99.17</ecNumber>
    </recommendedName>
    <alternativeName>
        <fullName evidence="1">Queuosine biosynthesis protein QueA</fullName>
    </alternativeName>
</protein>
<reference key="1">
    <citation type="journal article" date="2007" name="J. Bacteriol.">
        <title>Genome of the opportunistic pathogen Streptococcus sanguinis.</title>
        <authorList>
            <person name="Xu P."/>
            <person name="Alves J.M."/>
            <person name="Kitten T."/>
            <person name="Brown A."/>
            <person name="Chen Z."/>
            <person name="Ozaki L.S."/>
            <person name="Manque P."/>
            <person name="Ge X."/>
            <person name="Serrano M.G."/>
            <person name="Puiu D."/>
            <person name="Hendricks S."/>
            <person name="Wang Y."/>
            <person name="Chaplin M.D."/>
            <person name="Akan D."/>
            <person name="Paik S."/>
            <person name="Peterson D.L."/>
            <person name="Macrina F.L."/>
            <person name="Buck G.A."/>
        </authorList>
    </citation>
    <scope>NUCLEOTIDE SEQUENCE [LARGE SCALE GENOMIC DNA]</scope>
    <source>
        <strain>SK36</strain>
    </source>
</reference>
<evidence type="ECO:0000255" key="1">
    <source>
        <dbReference type="HAMAP-Rule" id="MF_00113"/>
    </source>
</evidence>
<proteinExistence type="inferred from homology"/>
<feature type="chain" id="PRO_1000015294" description="S-adenosylmethionine:tRNA ribosyltransferase-isomerase">
    <location>
        <begin position="1"/>
        <end position="342"/>
    </location>
</feature>
<name>QUEA_STRSV</name>
<keyword id="KW-0963">Cytoplasm</keyword>
<keyword id="KW-0671">Queuosine biosynthesis</keyword>
<keyword id="KW-1185">Reference proteome</keyword>
<keyword id="KW-0949">S-adenosyl-L-methionine</keyword>
<keyword id="KW-0808">Transferase</keyword>
<accession>A3CLX2</accession>